<organism>
    <name type="scientific">Methylibium petroleiphilum (strain ATCC BAA-1232 / LMG 22953 / PM1)</name>
    <dbReference type="NCBI Taxonomy" id="420662"/>
    <lineage>
        <taxon>Bacteria</taxon>
        <taxon>Pseudomonadati</taxon>
        <taxon>Pseudomonadota</taxon>
        <taxon>Betaproteobacteria</taxon>
        <taxon>Burkholderiales</taxon>
        <taxon>Sphaerotilaceae</taxon>
        <taxon>Methylibium</taxon>
    </lineage>
</organism>
<dbReference type="EC" id="1.17.7.4" evidence="1"/>
<dbReference type="EMBL" id="CP000555">
    <property type="protein sequence ID" value="ABM95647.1"/>
    <property type="molecule type" value="Genomic_DNA"/>
</dbReference>
<dbReference type="RefSeq" id="WP_011830277.1">
    <property type="nucleotide sequence ID" value="NC_008825.1"/>
</dbReference>
<dbReference type="SMR" id="A2SJA8"/>
<dbReference type="STRING" id="420662.Mpe_A2693"/>
<dbReference type="KEGG" id="mpt:Mpe_A2693"/>
<dbReference type="eggNOG" id="COG0761">
    <property type="taxonomic scope" value="Bacteria"/>
</dbReference>
<dbReference type="HOGENOM" id="CLU_027486_1_0_4"/>
<dbReference type="UniPathway" id="UPA00056">
    <property type="reaction ID" value="UER00097"/>
</dbReference>
<dbReference type="UniPathway" id="UPA00059">
    <property type="reaction ID" value="UER00105"/>
</dbReference>
<dbReference type="Proteomes" id="UP000000366">
    <property type="component" value="Chromosome"/>
</dbReference>
<dbReference type="GO" id="GO:0051539">
    <property type="term" value="F:4 iron, 4 sulfur cluster binding"/>
    <property type="evidence" value="ECO:0007669"/>
    <property type="project" value="UniProtKB-UniRule"/>
</dbReference>
<dbReference type="GO" id="GO:0051745">
    <property type="term" value="F:4-hydroxy-3-methylbut-2-enyl diphosphate reductase activity"/>
    <property type="evidence" value="ECO:0007669"/>
    <property type="project" value="UniProtKB-UniRule"/>
</dbReference>
<dbReference type="GO" id="GO:0046872">
    <property type="term" value="F:metal ion binding"/>
    <property type="evidence" value="ECO:0007669"/>
    <property type="project" value="UniProtKB-KW"/>
</dbReference>
<dbReference type="GO" id="GO:0050992">
    <property type="term" value="P:dimethylallyl diphosphate biosynthetic process"/>
    <property type="evidence" value="ECO:0007669"/>
    <property type="project" value="UniProtKB-UniRule"/>
</dbReference>
<dbReference type="GO" id="GO:0019288">
    <property type="term" value="P:isopentenyl diphosphate biosynthetic process, methylerythritol 4-phosphate pathway"/>
    <property type="evidence" value="ECO:0007669"/>
    <property type="project" value="UniProtKB-UniRule"/>
</dbReference>
<dbReference type="GO" id="GO:0016114">
    <property type="term" value="P:terpenoid biosynthetic process"/>
    <property type="evidence" value="ECO:0007669"/>
    <property type="project" value="UniProtKB-UniRule"/>
</dbReference>
<dbReference type="CDD" id="cd13944">
    <property type="entry name" value="lytB_ispH"/>
    <property type="match status" value="1"/>
</dbReference>
<dbReference type="Gene3D" id="3.40.50.11270">
    <property type="match status" value="1"/>
</dbReference>
<dbReference type="Gene3D" id="3.40.1010.20">
    <property type="entry name" value="4-hydroxy-3-methylbut-2-enyl diphosphate reductase, catalytic domain"/>
    <property type="match status" value="2"/>
</dbReference>
<dbReference type="HAMAP" id="MF_00191">
    <property type="entry name" value="IspH"/>
    <property type="match status" value="1"/>
</dbReference>
<dbReference type="InterPro" id="IPR003451">
    <property type="entry name" value="LytB/IspH"/>
</dbReference>
<dbReference type="NCBIfam" id="TIGR00216">
    <property type="entry name" value="ispH_lytB"/>
    <property type="match status" value="1"/>
</dbReference>
<dbReference type="NCBIfam" id="NF002188">
    <property type="entry name" value="PRK01045.1-2"/>
    <property type="match status" value="1"/>
</dbReference>
<dbReference type="NCBIfam" id="NF002190">
    <property type="entry name" value="PRK01045.1-4"/>
    <property type="match status" value="1"/>
</dbReference>
<dbReference type="PANTHER" id="PTHR30426">
    <property type="entry name" value="4-HYDROXY-3-METHYLBUT-2-ENYL DIPHOSPHATE REDUCTASE"/>
    <property type="match status" value="1"/>
</dbReference>
<dbReference type="PANTHER" id="PTHR30426:SF0">
    <property type="entry name" value="4-HYDROXY-3-METHYLBUT-2-ENYL DIPHOSPHATE REDUCTASE"/>
    <property type="match status" value="1"/>
</dbReference>
<dbReference type="Pfam" id="PF02401">
    <property type="entry name" value="LYTB"/>
    <property type="match status" value="1"/>
</dbReference>
<name>ISPH_METPP</name>
<reference key="1">
    <citation type="journal article" date="2007" name="J. Bacteriol.">
        <title>Whole-genome analysis of the methyl tert-butyl ether-degrading beta-proteobacterium Methylibium petroleiphilum PM1.</title>
        <authorList>
            <person name="Kane S.R."/>
            <person name="Chakicherla A.Y."/>
            <person name="Chain P.S.G."/>
            <person name="Schmidt R."/>
            <person name="Shin M.W."/>
            <person name="Legler T.C."/>
            <person name="Scow K.M."/>
            <person name="Larimer F.W."/>
            <person name="Lucas S.M."/>
            <person name="Richardson P.M."/>
            <person name="Hristova K.R."/>
        </authorList>
    </citation>
    <scope>NUCLEOTIDE SEQUENCE [LARGE SCALE GENOMIC DNA]</scope>
    <source>
        <strain>ATCC BAA-1232 / LMG 22953 / PM1</strain>
    </source>
</reference>
<sequence>MTMDTSPSHDAERGVTDVLLAEPRGFCAGVDRAIEIVERAIRKFGAPIYVRHEIVHNTFVVNDLKAKGAIFIEDLADVPPGATLVFSAHGVSRAVRDEAEARGFSVYDATCPLVTKVHVEVAKLHKEGYEFIMIGHKGHPEVEGTMGQLSEGIYLVEDVDDVAQLRVTRPDRLAVVTQTTLSTDDAAEILAAVKRRFPQVREPKQQDICYATQNRQDAVKVLAPQVDVVVVVGSPTSSNSNRLRELAERLGTPAYMVDSASDLRPEWFEGSARVGLTAGASAPELLVREVIERLRALGAVSVRKMAGVEETVRFPLPLGLGDKSMEGVA</sequence>
<comment type="function">
    <text evidence="1">Catalyzes the conversion of 1-hydroxy-2-methyl-2-(E)-butenyl 4-diphosphate (HMBPP) into a mixture of isopentenyl diphosphate (IPP) and dimethylallyl diphosphate (DMAPP). Acts in the terminal step of the DOXP/MEP pathway for isoprenoid precursor biosynthesis.</text>
</comment>
<comment type="catalytic activity">
    <reaction evidence="1">
        <text>isopentenyl diphosphate + 2 oxidized [2Fe-2S]-[ferredoxin] + H2O = (2E)-4-hydroxy-3-methylbut-2-enyl diphosphate + 2 reduced [2Fe-2S]-[ferredoxin] + 2 H(+)</text>
        <dbReference type="Rhea" id="RHEA:24488"/>
        <dbReference type="Rhea" id="RHEA-COMP:10000"/>
        <dbReference type="Rhea" id="RHEA-COMP:10001"/>
        <dbReference type="ChEBI" id="CHEBI:15377"/>
        <dbReference type="ChEBI" id="CHEBI:15378"/>
        <dbReference type="ChEBI" id="CHEBI:33737"/>
        <dbReference type="ChEBI" id="CHEBI:33738"/>
        <dbReference type="ChEBI" id="CHEBI:128753"/>
        <dbReference type="ChEBI" id="CHEBI:128769"/>
        <dbReference type="EC" id="1.17.7.4"/>
    </reaction>
</comment>
<comment type="catalytic activity">
    <reaction evidence="1">
        <text>dimethylallyl diphosphate + 2 oxidized [2Fe-2S]-[ferredoxin] + H2O = (2E)-4-hydroxy-3-methylbut-2-enyl diphosphate + 2 reduced [2Fe-2S]-[ferredoxin] + 2 H(+)</text>
        <dbReference type="Rhea" id="RHEA:24825"/>
        <dbReference type="Rhea" id="RHEA-COMP:10000"/>
        <dbReference type="Rhea" id="RHEA-COMP:10001"/>
        <dbReference type="ChEBI" id="CHEBI:15377"/>
        <dbReference type="ChEBI" id="CHEBI:15378"/>
        <dbReference type="ChEBI" id="CHEBI:33737"/>
        <dbReference type="ChEBI" id="CHEBI:33738"/>
        <dbReference type="ChEBI" id="CHEBI:57623"/>
        <dbReference type="ChEBI" id="CHEBI:128753"/>
        <dbReference type="EC" id="1.17.7.4"/>
    </reaction>
</comment>
<comment type="cofactor">
    <cofactor evidence="1">
        <name>[4Fe-4S] cluster</name>
        <dbReference type="ChEBI" id="CHEBI:49883"/>
    </cofactor>
    <text evidence="1">Binds 1 [4Fe-4S] cluster per subunit.</text>
</comment>
<comment type="pathway">
    <text evidence="1">Isoprenoid biosynthesis; dimethylallyl diphosphate biosynthesis; dimethylallyl diphosphate from (2E)-4-hydroxy-3-methylbutenyl diphosphate: step 1/1.</text>
</comment>
<comment type="pathway">
    <text evidence="1">Isoprenoid biosynthesis; isopentenyl diphosphate biosynthesis via DXP pathway; isopentenyl diphosphate from 1-deoxy-D-xylulose 5-phosphate: step 6/6.</text>
</comment>
<comment type="similarity">
    <text evidence="1">Belongs to the IspH family.</text>
</comment>
<evidence type="ECO:0000255" key="1">
    <source>
        <dbReference type="HAMAP-Rule" id="MF_00191"/>
    </source>
</evidence>
<keyword id="KW-0004">4Fe-4S</keyword>
<keyword id="KW-0408">Iron</keyword>
<keyword id="KW-0411">Iron-sulfur</keyword>
<keyword id="KW-0414">Isoprene biosynthesis</keyword>
<keyword id="KW-0479">Metal-binding</keyword>
<keyword id="KW-0560">Oxidoreductase</keyword>
<keyword id="KW-1185">Reference proteome</keyword>
<feature type="chain" id="PRO_1000098957" description="4-hydroxy-3-methylbut-2-enyl diphosphate reductase">
    <location>
        <begin position="1"/>
        <end position="329"/>
    </location>
</feature>
<feature type="active site" description="Proton donor" evidence="1">
    <location>
        <position position="141"/>
    </location>
</feature>
<feature type="binding site" evidence="1">
    <location>
        <position position="27"/>
    </location>
    <ligand>
        <name>[4Fe-4S] cluster</name>
        <dbReference type="ChEBI" id="CHEBI:49883"/>
    </ligand>
</feature>
<feature type="binding site" evidence="1">
    <location>
        <position position="56"/>
    </location>
    <ligand>
        <name>(2E)-4-hydroxy-3-methylbut-2-enyl diphosphate</name>
        <dbReference type="ChEBI" id="CHEBI:128753"/>
    </ligand>
</feature>
<feature type="binding site" evidence="1">
    <location>
        <position position="56"/>
    </location>
    <ligand>
        <name>dimethylallyl diphosphate</name>
        <dbReference type="ChEBI" id="CHEBI:57623"/>
    </ligand>
</feature>
<feature type="binding site" evidence="1">
    <location>
        <position position="56"/>
    </location>
    <ligand>
        <name>isopentenyl diphosphate</name>
        <dbReference type="ChEBI" id="CHEBI:128769"/>
    </ligand>
</feature>
<feature type="binding site" evidence="1">
    <location>
        <position position="89"/>
    </location>
    <ligand>
        <name>(2E)-4-hydroxy-3-methylbut-2-enyl diphosphate</name>
        <dbReference type="ChEBI" id="CHEBI:128753"/>
    </ligand>
</feature>
<feature type="binding site" evidence="1">
    <location>
        <position position="89"/>
    </location>
    <ligand>
        <name>dimethylallyl diphosphate</name>
        <dbReference type="ChEBI" id="CHEBI:57623"/>
    </ligand>
</feature>
<feature type="binding site" evidence="1">
    <location>
        <position position="89"/>
    </location>
    <ligand>
        <name>isopentenyl diphosphate</name>
        <dbReference type="ChEBI" id="CHEBI:128769"/>
    </ligand>
</feature>
<feature type="binding site" evidence="1">
    <location>
        <position position="111"/>
    </location>
    <ligand>
        <name>[4Fe-4S] cluster</name>
        <dbReference type="ChEBI" id="CHEBI:49883"/>
    </ligand>
</feature>
<feature type="binding site" evidence="1">
    <location>
        <position position="139"/>
    </location>
    <ligand>
        <name>(2E)-4-hydroxy-3-methylbut-2-enyl diphosphate</name>
        <dbReference type="ChEBI" id="CHEBI:128753"/>
    </ligand>
</feature>
<feature type="binding site" evidence="1">
    <location>
        <position position="139"/>
    </location>
    <ligand>
        <name>dimethylallyl diphosphate</name>
        <dbReference type="ChEBI" id="CHEBI:57623"/>
    </ligand>
</feature>
<feature type="binding site" evidence="1">
    <location>
        <position position="139"/>
    </location>
    <ligand>
        <name>isopentenyl diphosphate</name>
        <dbReference type="ChEBI" id="CHEBI:128769"/>
    </ligand>
</feature>
<feature type="binding site" evidence="1">
    <location>
        <position position="179"/>
    </location>
    <ligand>
        <name>(2E)-4-hydroxy-3-methylbut-2-enyl diphosphate</name>
        <dbReference type="ChEBI" id="CHEBI:128753"/>
    </ligand>
</feature>
<feature type="binding site" evidence="1">
    <location>
        <position position="209"/>
    </location>
    <ligand>
        <name>[4Fe-4S] cluster</name>
        <dbReference type="ChEBI" id="CHEBI:49883"/>
    </ligand>
</feature>
<feature type="binding site" evidence="1">
    <location>
        <position position="237"/>
    </location>
    <ligand>
        <name>(2E)-4-hydroxy-3-methylbut-2-enyl diphosphate</name>
        <dbReference type="ChEBI" id="CHEBI:128753"/>
    </ligand>
</feature>
<feature type="binding site" evidence="1">
    <location>
        <position position="237"/>
    </location>
    <ligand>
        <name>dimethylallyl diphosphate</name>
        <dbReference type="ChEBI" id="CHEBI:57623"/>
    </ligand>
</feature>
<feature type="binding site" evidence="1">
    <location>
        <position position="237"/>
    </location>
    <ligand>
        <name>isopentenyl diphosphate</name>
        <dbReference type="ChEBI" id="CHEBI:128769"/>
    </ligand>
</feature>
<feature type="binding site" evidence="1">
    <location>
        <position position="238"/>
    </location>
    <ligand>
        <name>(2E)-4-hydroxy-3-methylbut-2-enyl diphosphate</name>
        <dbReference type="ChEBI" id="CHEBI:128753"/>
    </ligand>
</feature>
<feature type="binding site" evidence="1">
    <location>
        <position position="238"/>
    </location>
    <ligand>
        <name>dimethylallyl diphosphate</name>
        <dbReference type="ChEBI" id="CHEBI:57623"/>
    </ligand>
</feature>
<feature type="binding site" evidence="1">
    <location>
        <position position="238"/>
    </location>
    <ligand>
        <name>isopentenyl diphosphate</name>
        <dbReference type="ChEBI" id="CHEBI:128769"/>
    </ligand>
</feature>
<feature type="binding site" evidence="1">
    <location>
        <position position="239"/>
    </location>
    <ligand>
        <name>(2E)-4-hydroxy-3-methylbut-2-enyl diphosphate</name>
        <dbReference type="ChEBI" id="CHEBI:128753"/>
    </ligand>
</feature>
<feature type="binding site" evidence="1">
    <location>
        <position position="239"/>
    </location>
    <ligand>
        <name>dimethylallyl diphosphate</name>
        <dbReference type="ChEBI" id="CHEBI:57623"/>
    </ligand>
</feature>
<feature type="binding site" evidence="1">
    <location>
        <position position="239"/>
    </location>
    <ligand>
        <name>isopentenyl diphosphate</name>
        <dbReference type="ChEBI" id="CHEBI:128769"/>
    </ligand>
</feature>
<feature type="binding site" evidence="1">
    <location>
        <position position="281"/>
    </location>
    <ligand>
        <name>(2E)-4-hydroxy-3-methylbut-2-enyl diphosphate</name>
        <dbReference type="ChEBI" id="CHEBI:128753"/>
    </ligand>
</feature>
<feature type="binding site" evidence="1">
    <location>
        <position position="281"/>
    </location>
    <ligand>
        <name>dimethylallyl diphosphate</name>
        <dbReference type="ChEBI" id="CHEBI:57623"/>
    </ligand>
</feature>
<feature type="binding site" evidence="1">
    <location>
        <position position="281"/>
    </location>
    <ligand>
        <name>isopentenyl diphosphate</name>
        <dbReference type="ChEBI" id="CHEBI:128769"/>
    </ligand>
</feature>
<proteinExistence type="inferred from homology"/>
<protein>
    <recommendedName>
        <fullName evidence="1">4-hydroxy-3-methylbut-2-enyl diphosphate reductase</fullName>
        <shortName evidence="1">HMBPP reductase</shortName>
        <ecNumber evidence="1">1.17.7.4</ecNumber>
    </recommendedName>
</protein>
<accession>A2SJA8</accession>
<gene>
    <name evidence="1" type="primary">ispH</name>
    <name type="ordered locus">Mpe_A2693</name>
</gene>